<organism>
    <name type="scientific">Synechocystis sp. (strain ATCC 27184 / PCC 6803 / Kazusa)</name>
    <dbReference type="NCBI Taxonomy" id="1111708"/>
    <lineage>
        <taxon>Bacteria</taxon>
        <taxon>Bacillati</taxon>
        <taxon>Cyanobacteriota</taxon>
        <taxon>Cyanophyceae</taxon>
        <taxon>Synechococcales</taxon>
        <taxon>Merismopediaceae</taxon>
        <taxon>Synechocystis</taxon>
    </lineage>
</organism>
<proteinExistence type="inferred from homology"/>
<sequence length="152" mass="16641">MAKRVKVVLNETINKLGFTGDLVEVAPGYARNYLIPKGLGVVATPGILRQVEQRRLKELERLKAEKDAAEARKVALETIGRFVIKKQVGEAEAIFGTVTTQEVADAVEAATNQSLDRRGISLPDIHKTGFYQAQIKLHPEVIATVEVQVAPL</sequence>
<feature type="chain" id="PRO_0000176694" description="Large ribosomal subunit protein bL9">
    <location>
        <begin position="1"/>
        <end position="152"/>
    </location>
</feature>
<keyword id="KW-1185">Reference proteome</keyword>
<keyword id="KW-0687">Ribonucleoprotein</keyword>
<keyword id="KW-0689">Ribosomal protein</keyword>
<keyword id="KW-0694">RNA-binding</keyword>
<keyword id="KW-0699">rRNA-binding</keyword>
<dbReference type="EMBL" id="D10716">
    <property type="protein sequence ID" value="BAA38819.1"/>
    <property type="status" value="ALT_INIT"/>
    <property type="molecule type" value="Genomic_DNA"/>
</dbReference>
<dbReference type="EMBL" id="BA000022">
    <property type="protein sequence ID" value="BAA18173.1"/>
    <property type="status" value="ALT_INIT"/>
    <property type="molecule type" value="Genomic_DNA"/>
</dbReference>
<dbReference type="PIR" id="S33614">
    <property type="entry name" value="S33614"/>
</dbReference>
<dbReference type="SMR" id="P42352"/>
<dbReference type="FunCoup" id="P42352">
    <property type="interactions" value="528"/>
</dbReference>
<dbReference type="IntAct" id="P42352">
    <property type="interactions" value="2"/>
</dbReference>
<dbReference type="STRING" id="1148.gene:10499046"/>
<dbReference type="PaxDb" id="1148-1653258"/>
<dbReference type="EnsemblBacteria" id="BAA18173">
    <property type="protein sequence ID" value="BAA18173"/>
    <property type="gene ID" value="BAA18173"/>
</dbReference>
<dbReference type="KEGG" id="syn:sll1244"/>
<dbReference type="eggNOG" id="COG0359">
    <property type="taxonomic scope" value="Bacteria"/>
</dbReference>
<dbReference type="InParanoid" id="P42352"/>
<dbReference type="PhylomeDB" id="P42352"/>
<dbReference type="Proteomes" id="UP000001425">
    <property type="component" value="Chromosome"/>
</dbReference>
<dbReference type="GO" id="GO:0022625">
    <property type="term" value="C:cytosolic large ribosomal subunit"/>
    <property type="evidence" value="ECO:0000318"/>
    <property type="project" value="GO_Central"/>
</dbReference>
<dbReference type="GO" id="GO:0019843">
    <property type="term" value="F:rRNA binding"/>
    <property type="evidence" value="ECO:0007669"/>
    <property type="project" value="UniProtKB-UniRule"/>
</dbReference>
<dbReference type="GO" id="GO:0003735">
    <property type="term" value="F:structural constituent of ribosome"/>
    <property type="evidence" value="ECO:0007669"/>
    <property type="project" value="InterPro"/>
</dbReference>
<dbReference type="GO" id="GO:0006412">
    <property type="term" value="P:translation"/>
    <property type="evidence" value="ECO:0007669"/>
    <property type="project" value="UniProtKB-UniRule"/>
</dbReference>
<dbReference type="FunFam" id="3.40.5.10:FF:000003">
    <property type="entry name" value="50S ribosomal protein L9"/>
    <property type="match status" value="1"/>
</dbReference>
<dbReference type="Gene3D" id="3.10.430.100">
    <property type="entry name" value="Ribosomal protein L9, C-terminal domain"/>
    <property type="match status" value="1"/>
</dbReference>
<dbReference type="Gene3D" id="3.40.5.10">
    <property type="entry name" value="Ribosomal protein L9, N-terminal domain"/>
    <property type="match status" value="1"/>
</dbReference>
<dbReference type="HAMAP" id="MF_00503">
    <property type="entry name" value="Ribosomal_bL9"/>
    <property type="match status" value="1"/>
</dbReference>
<dbReference type="InterPro" id="IPR000244">
    <property type="entry name" value="Ribosomal_bL9"/>
</dbReference>
<dbReference type="InterPro" id="IPR009027">
    <property type="entry name" value="Ribosomal_bL9/RNase_H1_N"/>
</dbReference>
<dbReference type="InterPro" id="IPR020594">
    <property type="entry name" value="Ribosomal_bL9_bac/chp"/>
</dbReference>
<dbReference type="InterPro" id="IPR020069">
    <property type="entry name" value="Ribosomal_bL9_C"/>
</dbReference>
<dbReference type="InterPro" id="IPR036791">
    <property type="entry name" value="Ribosomal_bL9_C_sf"/>
</dbReference>
<dbReference type="InterPro" id="IPR020070">
    <property type="entry name" value="Ribosomal_bL9_N"/>
</dbReference>
<dbReference type="InterPro" id="IPR036935">
    <property type="entry name" value="Ribosomal_bL9_N_sf"/>
</dbReference>
<dbReference type="NCBIfam" id="TIGR00158">
    <property type="entry name" value="L9"/>
    <property type="match status" value="1"/>
</dbReference>
<dbReference type="PANTHER" id="PTHR21368">
    <property type="entry name" value="50S RIBOSOMAL PROTEIN L9"/>
    <property type="match status" value="1"/>
</dbReference>
<dbReference type="Pfam" id="PF03948">
    <property type="entry name" value="Ribosomal_L9_C"/>
    <property type="match status" value="1"/>
</dbReference>
<dbReference type="Pfam" id="PF01281">
    <property type="entry name" value="Ribosomal_L9_N"/>
    <property type="match status" value="1"/>
</dbReference>
<dbReference type="SUPFAM" id="SSF55658">
    <property type="entry name" value="L9 N-domain-like"/>
    <property type="match status" value="1"/>
</dbReference>
<dbReference type="SUPFAM" id="SSF55653">
    <property type="entry name" value="Ribosomal protein L9 C-domain"/>
    <property type="match status" value="1"/>
</dbReference>
<dbReference type="PROSITE" id="PS00651">
    <property type="entry name" value="RIBOSOMAL_L9"/>
    <property type="match status" value="1"/>
</dbReference>
<comment type="function">
    <text evidence="1">Binds to the 23S rRNA.</text>
</comment>
<comment type="similarity">
    <text evidence="1">Belongs to the bacterial ribosomal protein bL9 family.</text>
</comment>
<comment type="sequence caution" evidence="2">
    <conflict type="erroneous initiation">
        <sequence resource="EMBL-CDS" id="BAA18173"/>
    </conflict>
</comment>
<comment type="sequence caution" evidence="2">
    <conflict type="erroneous initiation">
        <sequence resource="EMBL-CDS" id="BAA38819"/>
    </conflict>
</comment>
<name>RL9_SYNY3</name>
<protein>
    <recommendedName>
        <fullName evidence="1">Large ribosomal subunit protein bL9</fullName>
    </recommendedName>
    <alternativeName>
        <fullName evidence="2">50S ribosomal protein L9</fullName>
    </alternativeName>
</protein>
<reference key="1">
    <citation type="journal article" date="1993" name="Plant Mol. Biol.">
        <title>Structure of a cyanobacterial gene encoding the 50S ribosomal protein L9.</title>
        <authorList>
            <person name="Malakhov M.P."/>
            <person name="Wada H."/>
            <person name="Los D.A."/>
            <person name="Sakamoto T."/>
            <person name="Murata N."/>
        </authorList>
    </citation>
    <scope>NUCLEOTIDE SEQUENCE [GENOMIC DNA]</scope>
</reference>
<reference key="2">
    <citation type="journal article" date="1996" name="DNA Res.">
        <title>Sequence analysis of the genome of the unicellular cyanobacterium Synechocystis sp. strain PCC6803. II. Sequence determination of the entire genome and assignment of potential protein-coding regions.</title>
        <authorList>
            <person name="Kaneko T."/>
            <person name="Sato S."/>
            <person name="Kotani H."/>
            <person name="Tanaka A."/>
            <person name="Asamizu E."/>
            <person name="Nakamura Y."/>
            <person name="Miyajima N."/>
            <person name="Hirosawa M."/>
            <person name="Sugiura M."/>
            <person name="Sasamoto S."/>
            <person name="Kimura T."/>
            <person name="Hosouchi T."/>
            <person name="Matsuno A."/>
            <person name="Muraki A."/>
            <person name="Nakazaki N."/>
            <person name="Naruo K."/>
            <person name="Okumura S."/>
            <person name="Shimpo S."/>
            <person name="Takeuchi C."/>
            <person name="Wada T."/>
            <person name="Watanabe A."/>
            <person name="Yamada M."/>
            <person name="Yasuda M."/>
            <person name="Tabata S."/>
        </authorList>
    </citation>
    <scope>NUCLEOTIDE SEQUENCE [LARGE SCALE GENOMIC DNA]</scope>
    <source>
        <strain>ATCC 27184 / PCC 6803 / Kazusa</strain>
    </source>
</reference>
<evidence type="ECO:0000255" key="1">
    <source>
        <dbReference type="HAMAP-Rule" id="MF_00503"/>
    </source>
</evidence>
<evidence type="ECO:0000305" key="2"/>
<accession>P42352</accession>
<gene>
    <name evidence="1" type="primary">rplI</name>
    <name evidence="1" type="synonym">rpl9</name>
    <name type="ordered locus">sll1244</name>
</gene>